<protein>
    <recommendedName>
        <fullName evidence="1">UDP-3-O-acylglucosamine N-acyltransferase</fullName>
        <ecNumber evidence="1">2.3.1.191</ecNumber>
    </recommendedName>
</protein>
<reference key="1">
    <citation type="journal article" date="2008" name="Genome Res.">
        <title>Genome sequence of the beta-rhizobium Cupriavidus taiwanensis and comparative genomics of rhizobia.</title>
        <authorList>
            <person name="Amadou C."/>
            <person name="Pascal G."/>
            <person name="Mangenot S."/>
            <person name="Glew M."/>
            <person name="Bontemps C."/>
            <person name="Capela D."/>
            <person name="Carrere S."/>
            <person name="Cruveiller S."/>
            <person name="Dossat C."/>
            <person name="Lajus A."/>
            <person name="Marchetti M."/>
            <person name="Poinsot V."/>
            <person name="Rouy Z."/>
            <person name="Servin B."/>
            <person name="Saad M."/>
            <person name="Schenowitz C."/>
            <person name="Barbe V."/>
            <person name="Batut J."/>
            <person name="Medigue C."/>
            <person name="Masson-Boivin C."/>
        </authorList>
    </citation>
    <scope>NUCLEOTIDE SEQUENCE [LARGE SCALE GENOMIC DNA]</scope>
    <source>
        <strain>DSM 17343 / BCRC 17206 / CCUG 44338 / CIP 107171 / LMG 19424 / R1</strain>
    </source>
</reference>
<gene>
    <name evidence="1" type="primary">lpxD</name>
    <name type="ordered locus">RALTA_A1681</name>
</gene>
<feature type="chain" id="PRO_1000127673" description="UDP-3-O-acylglucosamine N-acyltransferase">
    <location>
        <begin position="1"/>
        <end position="363"/>
    </location>
</feature>
<feature type="active site" description="Proton acceptor" evidence="1">
    <location>
        <position position="252"/>
    </location>
</feature>
<evidence type="ECO:0000255" key="1">
    <source>
        <dbReference type="HAMAP-Rule" id="MF_00523"/>
    </source>
</evidence>
<keyword id="KW-0012">Acyltransferase</keyword>
<keyword id="KW-0441">Lipid A biosynthesis</keyword>
<keyword id="KW-0444">Lipid biosynthesis</keyword>
<keyword id="KW-0443">Lipid metabolism</keyword>
<keyword id="KW-0677">Repeat</keyword>
<keyword id="KW-0808">Transferase</keyword>
<accession>B3R2A7</accession>
<organism>
    <name type="scientific">Cupriavidus taiwanensis (strain DSM 17343 / BCRC 17206 / CCUG 44338 / CIP 107171 / LMG 19424 / R1)</name>
    <name type="common">Ralstonia taiwanensis (strain LMG 19424)</name>
    <dbReference type="NCBI Taxonomy" id="977880"/>
    <lineage>
        <taxon>Bacteria</taxon>
        <taxon>Pseudomonadati</taxon>
        <taxon>Pseudomonadota</taxon>
        <taxon>Betaproteobacteria</taxon>
        <taxon>Burkholderiales</taxon>
        <taxon>Burkholderiaceae</taxon>
        <taxon>Cupriavidus</taxon>
    </lineage>
</organism>
<comment type="function">
    <text evidence="1">Catalyzes the N-acylation of UDP-3-O-acylglucosamine using 3-hydroxyacyl-ACP as the acyl donor. Is involved in the biosynthesis of lipid A, a phosphorylated glycolipid that anchors the lipopolysaccharide to the outer membrane of the cell.</text>
</comment>
<comment type="catalytic activity">
    <reaction evidence="1">
        <text>a UDP-3-O-[(3R)-3-hydroxyacyl]-alpha-D-glucosamine + a (3R)-hydroxyacyl-[ACP] = a UDP-2-N,3-O-bis[(3R)-3-hydroxyacyl]-alpha-D-glucosamine + holo-[ACP] + H(+)</text>
        <dbReference type="Rhea" id="RHEA:53836"/>
        <dbReference type="Rhea" id="RHEA-COMP:9685"/>
        <dbReference type="Rhea" id="RHEA-COMP:9945"/>
        <dbReference type="ChEBI" id="CHEBI:15378"/>
        <dbReference type="ChEBI" id="CHEBI:64479"/>
        <dbReference type="ChEBI" id="CHEBI:78827"/>
        <dbReference type="ChEBI" id="CHEBI:137740"/>
        <dbReference type="ChEBI" id="CHEBI:137748"/>
        <dbReference type="EC" id="2.3.1.191"/>
    </reaction>
</comment>
<comment type="pathway">
    <text evidence="1">Bacterial outer membrane biogenesis; LPS lipid A biosynthesis.</text>
</comment>
<comment type="subunit">
    <text evidence="1">Homotrimer.</text>
</comment>
<comment type="similarity">
    <text evidence="1">Belongs to the transferase hexapeptide repeat family. LpxD subfamily.</text>
</comment>
<dbReference type="EC" id="2.3.1.191" evidence="1"/>
<dbReference type="EMBL" id="CU633749">
    <property type="protein sequence ID" value="CAQ69624.1"/>
    <property type="molecule type" value="Genomic_DNA"/>
</dbReference>
<dbReference type="RefSeq" id="WP_012352944.1">
    <property type="nucleotide sequence ID" value="NC_010528.1"/>
</dbReference>
<dbReference type="SMR" id="B3R2A7"/>
<dbReference type="GeneID" id="29761238"/>
<dbReference type="KEGG" id="cti:RALTA_A1681"/>
<dbReference type="eggNOG" id="COG1044">
    <property type="taxonomic scope" value="Bacteria"/>
</dbReference>
<dbReference type="HOGENOM" id="CLU_049865_0_1_4"/>
<dbReference type="BioCyc" id="CTAI977880:RALTA_RS08080-MONOMER"/>
<dbReference type="UniPathway" id="UPA00973"/>
<dbReference type="Proteomes" id="UP000001692">
    <property type="component" value="Chromosome 1"/>
</dbReference>
<dbReference type="GO" id="GO:0016020">
    <property type="term" value="C:membrane"/>
    <property type="evidence" value="ECO:0007669"/>
    <property type="project" value="GOC"/>
</dbReference>
<dbReference type="GO" id="GO:0016410">
    <property type="term" value="F:N-acyltransferase activity"/>
    <property type="evidence" value="ECO:0007669"/>
    <property type="project" value="InterPro"/>
</dbReference>
<dbReference type="GO" id="GO:0009245">
    <property type="term" value="P:lipid A biosynthetic process"/>
    <property type="evidence" value="ECO:0007669"/>
    <property type="project" value="UniProtKB-UniRule"/>
</dbReference>
<dbReference type="CDD" id="cd03352">
    <property type="entry name" value="LbH_LpxD"/>
    <property type="match status" value="1"/>
</dbReference>
<dbReference type="Gene3D" id="2.160.10.10">
    <property type="entry name" value="Hexapeptide repeat proteins"/>
    <property type="match status" value="1"/>
</dbReference>
<dbReference type="Gene3D" id="3.40.1390.10">
    <property type="entry name" value="MurE/MurF, N-terminal domain"/>
    <property type="match status" value="1"/>
</dbReference>
<dbReference type="HAMAP" id="MF_00523">
    <property type="entry name" value="LpxD"/>
    <property type="match status" value="1"/>
</dbReference>
<dbReference type="InterPro" id="IPR001451">
    <property type="entry name" value="Hexapep"/>
</dbReference>
<dbReference type="InterPro" id="IPR007691">
    <property type="entry name" value="LpxD"/>
</dbReference>
<dbReference type="InterPro" id="IPR011004">
    <property type="entry name" value="Trimer_LpxA-like_sf"/>
</dbReference>
<dbReference type="InterPro" id="IPR020573">
    <property type="entry name" value="UDP_GlcNAc_AcTrfase_non-rep"/>
</dbReference>
<dbReference type="NCBIfam" id="TIGR01853">
    <property type="entry name" value="lipid_A_lpxD"/>
    <property type="match status" value="1"/>
</dbReference>
<dbReference type="NCBIfam" id="NF002060">
    <property type="entry name" value="PRK00892.1"/>
    <property type="match status" value="1"/>
</dbReference>
<dbReference type="PANTHER" id="PTHR43378">
    <property type="entry name" value="UDP-3-O-ACYLGLUCOSAMINE N-ACYLTRANSFERASE"/>
    <property type="match status" value="1"/>
</dbReference>
<dbReference type="PANTHER" id="PTHR43378:SF2">
    <property type="entry name" value="UDP-3-O-ACYLGLUCOSAMINE N-ACYLTRANSFERASE 1, MITOCHONDRIAL-RELATED"/>
    <property type="match status" value="1"/>
</dbReference>
<dbReference type="Pfam" id="PF00132">
    <property type="entry name" value="Hexapep"/>
    <property type="match status" value="2"/>
</dbReference>
<dbReference type="Pfam" id="PF04613">
    <property type="entry name" value="LpxD"/>
    <property type="match status" value="1"/>
</dbReference>
<dbReference type="SUPFAM" id="SSF51161">
    <property type="entry name" value="Trimeric LpxA-like enzymes"/>
    <property type="match status" value="1"/>
</dbReference>
<dbReference type="PROSITE" id="PS00101">
    <property type="entry name" value="HEXAPEP_TRANSFERASES"/>
    <property type="match status" value="1"/>
</dbReference>
<name>LPXD_CUPTR</name>
<proteinExistence type="inferred from homology"/>
<sequence>MQTPTLGQLATENGAQVVGDPDLAITGLAPLDQAGPGELSFLSNPLYLQQALDAKAGAVIVSAADLERVRAEGKADGRNWLVARNPYVCFARVAQRFDRAANTDARTGIDARATVAPDAVVPASCYIGPNVVIEAGARLGERVRILANGYVGAHAQIGDDALLYANVSVYHHCVVGARAILHSGVVIGADGFGFAPDISASGVEYVKIPQTGRAVLGDDVEVGANTAIDRGAMADTVIEDGCKIDNQVQIAHNVRVGAHTVIAGCAAVSGSTRIGRFCVIGGAANFAGHLTIADRTTVSGGTSITKSITKPGGHFTSVFPFLPHGEWERNAAIVRGLSKLRERVVALERRLRGQAAGSQPSQD</sequence>